<proteinExistence type="inferred from homology"/>
<keyword id="KW-0066">ATP synthesis</keyword>
<keyword id="KW-0138">CF(0)</keyword>
<keyword id="KW-0375">Hydrogen ion transport</keyword>
<keyword id="KW-0406">Ion transport</keyword>
<keyword id="KW-0472">Membrane</keyword>
<keyword id="KW-0496">Mitochondrion</keyword>
<keyword id="KW-0999">Mitochondrion inner membrane</keyword>
<keyword id="KW-0812">Transmembrane</keyword>
<keyword id="KW-1133">Transmembrane helix</keyword>
<keyword id="KW-0813">Transport</keyword>
<comment type="function">
    <text>Mitochondrial membrane ATP synthase (F(1)F(0) ATP synthase or Complex V) produces ATP from ADP in the presence of a proton gradient across the membrane which is generated by electron transport complexes of the respiratory chain. F-type ATPases consist of two structural domains, F(1) - containing the extramembraneous catalytic core and F(0) - containing the membrane proton channel, linked together by a central stalk and a peripheral stalk. During catalysis, ATP synthesis in the catalytic domain of F(1) is coupled via a rotary mechanism of the central stalk subunits to proton translocation. Key component of the proton channel; it may play a direct role in the translocation of protons across the membrane.</text>
</comment>
<comment type="subunit">
    <text>F-type ATPases have 2 components, CF(1) - the catalytic core - and CF(0) - the membrane proton channel. CF(1) has five subunits: alpha(3), beta(3), gamma(1), delta(1), epsilon(1). CF(0) has three main subunits: a, b and c.</text>
</comment>
<comment type="subcellular location">
    <subcellularLocation>
        <location>Mitochondrion inner membrane</location>
        <topology>Multi-pass membrane protein</topology>
    </subcellularLocation>
</comment>
<comment type="similarity">
    <text evidence="2">Belongs to the ATPase A chain family.</text>
</comment>
<geneLocation type="mitochondrion"/>
<gene>
    <name type="primary">ATP6</name>
</gene>
<dbReference type="EMBL" id="Z37967">
    <property type="protein sequence ID" value="CAA86023.1"/>
    <property type="molecule type" value="Genomic_DNA"/>
</dbReference>
<dbReference type="PIR" id="S57461">
    <property type="entry name" value="S57461"/>
</dbReference>
<dbReference type="RefSeq" id="NP_150403.1">
    <property type="nucleotide sequence ID" value="NC_003055.1"/>
</dbReference>
<dbReference type="SMR" id="Q37601"/>
<dbReference type="GeneID" id="803711"/>
<dbReference type="GO" id="GO:0005743">
    <property type="term" value="C:mitochondrial inner membrane"/>
    <property type="evidence" value="ECO:0007669"/>
    <property type="project" value="UniProtKB-SubCell"/>
</dbReference>
<dbReference type="GO" id="GO:0045259">
    <property type="term" value="C:proton-transporting ATP synthase complex"/>
    <property type="evidence" value="ECO:0007669"/>
    <property type="project" value="UniProtKB-KW"/>
</dbReference>
<dbReference type="GO" id="GO:0046933">
    <property type="term" value="F:proton-transporting ATP synthase activity, rotational mechanism"/>
    <property type="evidence" value="ECO:0007669"/>
    <property type="project" value="TreeGrafter"/>
</dbReference>
<dbReference type="CDD" id="cd00310">
    <property type="entry name" value="ATP-synt_Fo_a_6"/>
    <property type="match status" value="1"/>
</dbReference>
<dbReference type="FunFam" id="1.20.120.220:FF:000003">
    <property type="entry name" value="ATP synthase subunit a"/>
    <property type="match status" value="1"/>
</dbReference>
<dbReference type="Gene3D" id="1.20.120.220">
    <property type="entry name" value="ATP synthase, F0 complex, subunit A"/>
    <property type="match status" value="1"/>
</dbReference>
<dbReference type="HAMAP" id="MF_01393">
    <property type="entry name" value="ATP_synth_a_bact"/>
    <property type="match status" value="1"/>
</dbReference>
<dbReference type="InterPro" id="IPR000568">
    <property type="entry name" value="ATP_synth_F0_asu"/>
</dbReference>
<dbReference type="InterPro" id="IPR023011">
    <property type="entry name" value="ATP_synth_F0_asu_AS"/>
</dbReference>
<dbReference type="InterPro" id="IPR045083">
    <property type="entry name" value="ATP_synth_F0_asu_bact/mt"/>
</dbReference>
<dbReference type="InterPro" id="IPR035908">
    <property type="entry name" value="F0_ATP_A_sf"/>
</dbReference>
<dbReference type="NCBIfam" id="TIGR01131">
    <property type="entry name" value="ATP_synt_6_or_A"/>
    <property type="match status" value="1"/>
</dbReference>
<dbReference type="NCBIfam" id="NF004482">
    <property type="entry name" value="PRK05815.2-4"/>
    <property type="match status" value="1"/>
</dbReference>
<dbReference type="PANTHER" id="PTHR11410">
    <property type="entry name" value="ATP SYNTHASE SUBUNIT A"/>
    <property type="match status" value="1"/>
</dbReference>
<dbReference type="PANTHER" id="PTHR11410:SF0">
    <property type="entry name" value="ATP SYNTHASE SUBUNIT A"/>
    <property type="match status" value="1"/>
</dbReference>
<dbReference type="Pfam" id="PF00119">
    <property type="entry name" value="ATP-synt_A"/>
    <property type="match status" value="1"/>
</dbReference>
<dbReference type="PRINTS" id="PR00123">
    <property type="entry name" value="ATPASEA"/>
</dbReference>
<dbReference type="SUPFAM" id="SSF81336">
    <property type="entry name" value="F1F0 ATP synthase subunit A"/>
    <property type="match status" value="1"/>
</dbReference>
<dbReference type="PROSITE" id="PS00449">
    <property type="entry name" value="ATPASE_A"/>
    <property type="match status" value="1"/>
</dbReference>
<reference key="1">
    <citation type="journal article" date="1995" name="Plant Physiol. Biochem.">
        <title>Characterisation of the cox3, nad7 and atp6 genes from the mitochondrial genome of the brown alga Pylaiella littoralis.</title>
        <authorList>
            <person name="Fontaine J.-M."/>
            <person name="Rousvoal S."/>
            <person name="Delaroque N."/>
            <person name="Loiseaux-De Goer S."/>
        </authorList>
    </citation>
    <scope>NUCLEOTIDE SEQUENCE [GENOMIC DNA]</scope>
</reference>
<accession>Q37601</accession>
<evidence type="ECO:0000255" key="1"/>
<evidence type="ECO:0000305" key="2"/>
<organism>
    <name type="scientific">Pylaiella littoralis</name>
    <name type="common">Seaweed</name>
    <name type="synonym">Conferva littoralis</name>
    <dbReference type="NCBI Taxonomy" id="2885"/>
    <lineage>
        <taxon>Eukaryota</taxon>
        <taxon>Sar</taxon>
        <taxon>Stramenopiles</taxon>
        <taxon>Ochrophyta</taxon>
        <taxon>PX clade</taxon>
        <taxon>Phaeophyceae</taxon>
        <taxon>Ectocarpales</taxon>
        <taxon>Acinetosporaceae</taxon>
        <taxon>Pylaiella</taxon>
    </lineage>
</organism>
<protein>
    <recommendedName>
        <fullName>ATP synthase subunit a</fullName>
    </recommendedName>
    <alternativeName>
        <fullName>F-ATPase protein 6</fullName>
    </alternativeName>
</protein>
<sequence length="248" mass="27309">MFNSPLEQFEILPLLSFGANLFDFSITNAMLTTCVSLSFFLFLFYCLFSYGLNSFPTRWQLVLEGLYTSTAGLVWDSVGPRRPKVFPFLFVIFSFILISNVQGLVPYSFTITSHLIQTMVLALTVFIGVIIIVLAHGFHMLSLFLPGGTSIVLAFLLVPIEIVSYVFKPLSLAVRLFANMMAGHTLLKVIAAVAWAMMGSGGLLLIAHIVPLGVLVILFGLELAVALIQAYVFTILSCIYINDAIVLH</sequence>
<name>ATP6_PYLLI</name>
<feature type="chain" id="PRO_0000082161" description="ATP synthase subunit a">
    <location>
        <begin position="1"/>
        <end position="248"/>
    </location>
</feature>
<feature type="transmembrane region" description="Helical" evidence="1">
    <location>
        <begin position="29"/>
        <end position="49"/>
    </location>
</feature>
<feature type="transmembrane region" description="Helical" evidence="1">
    <location>
        <begin position="85"/>
        <end position="105"/>
    </location>
</feature>
<feature type="transmembrane region" description="Helical" evidence="1">
    <location>
        <begin position="115"/>
        <end position="135"/>
    </location>
</feature>
<feature type="transmembrane region" description="Helical" evidence="1">
    <location>
        <begin position="143"/>
        <end position="163"/>
    </location>
</feature>
<feature type="transmembrane region" description="Helical" evidence="1">
    <location>
        <begin position="176"/>
        <end position="196"/>
    </location>
</feature>
<feature type="transmembrane region" description="Helical" evidence="1">
    <location>
        <begin position="201"/>
        <end position="221"/>
    </location>
</feature>
<feature type="transmembrane region" description="Helical" evidence="1">
    <location>
        <begin position="227"/>
        <end position="247"/>
    </location>
</feature>